<organism>
    <name type="scientific">Francisella tularensis subsp. holarctica (strain LVS)</name>
    <dbReference type="NCBI Taxonomy" id="376619"/>
    <lineage>
        <taxon>Bacteria</taxon>
        <taxon>Pseudomonadati</taxon>
        <taxon>Pseudomonadota</taxon>
        <taxon>Gammaproteobacteria</taxon>
        <taxon>Thiotrichales</taxon>
        <taxon>Francisellaceae</taxon>
        <taxon>Francisella</taxon>
    </lineage>
</organism>
<accession>Q2A1R5</accession>
<sequence>MKKIIICFIFVFSINVSFADATSELIDKIKNIHSMTANFNQKLIDGQTNNNLNSKGNMSLKKPQYFKWITTSPNNQEIVSNGTKLWIYDGDLDQLIIKKVSNDIAQFPYLILLSKNTNNINKLFTVTAQDNNSYILKPKNDQMIDSIKIKFTPNNQLEYLEISTSLNQFTKIEFNNVKTDVDISNTSFDFKAPQNTDIIDETKSA</sequence>
<feature type="signal peptide" evidence="1">
    <location>
        <begin position="1"/>
        <end position="19"/>
    </location>
</feature>
<feature type="chain" id="PRO_1000071825" description="Outer-membrane lipoprotein carrier protein">
    <location>
        <begin position="20"/>
        <end position="205"/>
    </location>
</feature>
<dbReference type="EMBL" id="AM233362">
    <property type="protein sequence ID" value="CAJ80145.1"/>
    <property type="molecule type" value="Genomic_DNA"/>
</dbReference>
<dbReference type="RefSeq" id="WP_003017161.1">
    <property type="nucleotide sequence ID" value="NZ_CP009694.1"/>
</dbReference>
<dbReference type="SMR" id="Q2A1R5"/>
<dbReference type="KEGG" id="ftl:FTL_1706"/>
<dbReference type="Proteomes" id="UP000001944">
    <property type="component" value="Chromosome"/>
</dbReference>
<dbReference type="GO" id="GO:0030288">
    <property type="term" value="C:outer membrane-bounded periplasmic space"/>
    <property type="evidence" value="ECO:0007669"/>
    <property type="project" value="TreeGrafter"/>
</dbReference>
<dbReference type="GO" id="GO:0044874">
    <property type="term" value="P:lipoprotein localization to outer membrane"/>
    <property type="evidence" value="ECO:0007669"/>
    <property type="project" value="UniProtKB-UniRule"/>
</dbReference>
<dbReference type="GO" id="GO:0042953">
    <property type="term" value="P:lipoprotein transport"/>
    <property type="evidence" value="ECO:0007669"/>
    <property type="project" value="InterPro"/>
</dbReference>
<dbReference type="CDD" id="cd16325">
    <property type="entry name" value="LolA"/>
    <property type="match status" value="1"/>
</dbReference>
<dbReference type="Gene3D" id="2.50.20.10">
    <property type="entry name" value="Lipoprotein localisation LolA/LolB/LppX"/>
    <property type="match status" value="1"/>
</dbReference>
<dbReference type="HAMAP" id="MF_00240">
    <property type="entry name" value="LolA"/>
    <property type="match status" value="1"/>
</dbReference>
<dbReference type="InterPro" id="IPR029046">
    <property type="entry name" value="LolA/LolB/LppX"/>
</dbReference>
<dbReference type="InterPro" id="IPR004564">
    <property type="entry name" value="OM_lipoprot_carrier_LolA-like"/>
</dbReference>
<dbReference type="InterPro" id="IPR018323">
    <property type="entry name" value="OM_lipoprot_carrier_LolA_Pbac"/>
</dbReference>
<dbReference type="NCBIfam" id="TIGR00547">
    <property type="entry name" value="lolA"/>
    <property type="match status" value="1"/>
</dbReference>
<dbReference type="PANTHER" id="PTHR35869">
    <property type="entry name" value="OUTER-MEMBRANE LIPOPROTEIN CARRIER PROTEIN"/>
    <property type="match status" value="1"/>
</dbReference>
<dbReference type="PANTHER" id="PTHR35869:SF1">
    <property type="entry name" value="OUTER-MEMBRANE LIPOPROTEIN CARRIER PROTEIN"/>
    <property type="match status" value="1"/>
</dbReference>
<dbReference type="Pfam" id="PF03548">
    <property type="entry name" value="LolA"/>
    <property type="match status" value="1"/>
</dbReference>
<dbReference type="SUPFAM" id="SSF89392">
    <property type="entry name" value="Prokaryotic lipoproteins and lipoprotein localization factors"/>
    <property type="match status" value="1"/>
</dbReference>
<comment type="function">
    <text evidence="1">Participates in the translocation of lipoproteins from the inner membrane to the outer membrane. Only forms a complex with a lipoprotein if the residue after the N-terminal Cys is not an aspartate (The Asp acts as a targeting signal to indicate that the lipoprotein should stay in the inner membrane).</text>
</comment>
<comment type="subunit">
    <text evidence="1">Monomer.</text>
</comment>
<comment type="subcellular location">
    <subcellularLocation>
        <location evidence="1">Periplasm</location>
    </subcellularLocation>
</comment>
<comment type="similarity">
    <text evidence="1">Belongs to the LolA family.</text>
</comment>
<gene>
    <name evidence="1" type="primary">lolA</name>
    <name type="ordered locus">FTL_1706</name>
</gene>
<keyword id="KW-0143">Chaperone</keyword>
<keyword id="KW-0574">Periplasm</keyword>
<keyword id="KW-0653">Protein transport</keyword>
<keyword id="KW-1185">Reference proteome</keyword>
<keyword id="KW-0732">Signal</keyword>
<keyword id="KW-0813">Transport</keyword>
<protein>
    <recommendedName>
        <fullName evidence="1">Outer-membrane lipoprotein carrier protein</fullName>
    </recommendedName>
</protein>
<evidence type="ECO:0000255" key="1">
    <source>
        <dbReference type="HAMAP-Rule" id="MF_00240"/>
    </source>
</evidence>
<proteinExistence type="inferred from homology"/>
<reference key="1">
    <citation type="submission" date="2006-03" db="EMBL/GenBank/DDBJ databases">
        <title>Complete genome sequence of Francisella tularensis LVS (Live Vaccine Strain).</title>
        <authorList>
            <person name="Chain P."/>
            <person name="Larimer F."/>
            <person name="Land M."/>
            <person name="Stilwagen S."/>
            <person name="Larsson P."/>
            <person name="Bearden S."/>
            <person name="Chu M."/>
            <person name="Oyston P."/>
            <person name="Forsman M."/>
            <person name="Andersson S."/>
            <person name="Lindler L."/>
            <person name="Titball R."/>
            <person name="Garcia E."/>
        </authorList>
    </citation>
    <scope>NUCLEOTIDE SEQUENCE [LARGE SCALE GENOMIC DNA]</scope>
    <source>
        <strain>LVS</strain>
    </source>
</reference>
<name>LOLA_FRATH</name>